<accession>A4SK62</accession>
<feature type="signal peptide" evidence="1">
    <location>
        <begin position="1"/>
        <end position="18"/>
    </location>
</feature>
<feature type="chain" id="PRO_0000336595" description="Outer-membrane lipoprotein LolB">
    <location>
        <begin position="19"/>
        <end position="194"/>
    </location>
</feature>
<feature type="lipid moiety-binding region" description="N-palmitoyl cysteine" evidence="1">
    <location>
        <position position="19"/>
    </location>
</feature>
<feature type="lipid moiety-binding region" description="S-diacylglycerol cysteine" evidence="1">
    <location>
        <position position="19"/>
    </location>
</feature>
<protein>
    <recommendedName>
        <fullName evidence="1">Outer-membrane lipoprotein LolB</fullName>
    </recommendedName>
</protein>
<keyword id="KW-0998">Cell outer membrane</keyword>
<keyword id="KW-0143">Chaperone</keyword>
<keyword id="KW-0449">Lipoprotein</keyword>
<keyword id="KW-0472">Membrane</keyword>
<keyword id="KW-0564">Palmitate</keyword>
<keyword id="KW-0653">Protein transport</keyword>
<keyword id="KW-0732">Signal</keyword>
<keyword id="KW-0813">Transport</keyword>
<proteinExistence type="inferred from homology"/>
<reference key="1">
    <citation type="journal article" date="2008" name="BMC Genomics">
        <title>The genome of Aeromonas salmonicida subsp. salmonicida A449: insights into the evolution of a fish pathogen.</title>
        <authorList>
            <person name="Reith M.E."/>
            <person name="Singh R.K."/>
            <person name="Curtis B."/>
            <person name="Boyd J.M."/>
            <person name="Bouevitch A."/>
            <person name="Kimball J."/>
            <person name="Munholland J."/>
            <person name="Murphy C."/>
            <person name="Sarty D."/>
            <person name="Williams J."/>
            <person name="Nash J.H."/>
            <person name="Johnson S.C."/>
            <person name="Brown L.L."/>
        </authorList>
    </citation>
    <scope>NUCLEOTIDE SEQUENCE [LARGE SCALE GENOMIC DNA]</scope>
    <source>
        <strain>A449</strain>
    </source>
</reference>
<gene>
    <name evidence="1" type="primary">lolB</name>
    <name type="ordered locus">ASA_1173</name>
</gene>
<sequence>MTLFLRIFTFGCLLLLAGCTTTQPQRDQVNWQKERTRLEQLSHWQLSGKMAIITVQQKGSARVNWQQNGDDYRLNLTSLIGTHILELSRSNGEITLIDNEGNPHQSQDAEALIYQLTGWNIPVQGLPEWIKGLPGKAEFELNPDSSLASVRDGQWQIVYGDYRDQDGYRLPHLLTMTGQGSRLKLQINQWTLAR</sequence>
<dbReference type="EMBL" id="CP000644">
    <property type="protein sequence ID" value="ABO89284.1"/>
    <property type="molecule type" value="Genomic_DNA"/>
</dbReference>
<dbReference type="RefSeq" id="WP_005317016.1">
    <property type="nucleotide sequence ID" value="NC_009348.1"/>
</dbReference>
<dbReference type="SMR" id="A4SK62"/>
<dbReference type="STRING" id="29491.GCA_000820065_02904"/>
<dbReference type="KEGG" id="asa:ASA_1173"/>
<dbReference type="PATRIC" id="fig|382245.13.peg.1164"/>
<dbReference type="eggNOG" id="COG3017">
    <property type="taxonomic scope" value="Bacteria"/>
</dbReference>
<dbReference type="HOGENOM" id="CLU_092816_1_0_6"/>
<dbReference type="Proteomes" id="UP000000225">
    <property type="component" value="Chromosome"/>
</dbReference>
<dbReference type="GO" id="GO:0009279">
    <property type="term" value="C:cell outer membrane"/>
    <property type="evidence" value="ECO:0007669"/>
    <property type="project" value="UniProtKB-SubCell"/>
</dbReference>
<dbReference type="GO" id="GO:0044874">
    <property type="term" value="P:lipoprotein localization to outer membrane"/>
    <property type="evidence" value="ECO:0007669"/>
    <property type="project" value="UniProtKB-UniRule"/>
</dbReference>
<dbReference type="GO" id="GO:0015031">
    <property type="term" value="P:protein transport"/>
    <property type="evidence" value="ECO:0007669"/>
    <property type="project" value="UniProtKB-KW"/>
</dbReference>
<dbReference type="CDD" id="cd16326">
    <property type="entry name" value="LolB"/>
    <property type="match status" value="1"/>
</dbReference>
<dbReference type="Gene3D" id="2.50.20.10">
    <property type="entry name" value="Lipoprotein localisation LolA/LolB/LppX"/>
    <property type="match status" value="1"/>
</dbReference>
<dbReference type="HAMAP" id="MF_00233">
    <property type="entry name" value="LolB"/>
    <property type="match status" value="1"/>
</dbReference>
<dbReference type="InterPro" id="IPR029046">
    <property type="entry name" value="LolA/LolB/LppX"/>
</dbReference>
<dbReference type="InterPro" id="IPR004565">
    <property type="entry name" value="OM_lipoprot_LolB"/>
</dbReference>
<dbReference type="NCBIfam" id="TIGR00548">
    <property type="entry name" value="lolB"/>
    <property type="match status" value="1"/>
</dbReference>
<dbReference type="Pfam" id="PF03550">
    <property type="entry name" value="LolB"/>
    <property type="match status" value="1"/>
</dbReference>
<dbReference type="SUPFAM" id="SSF89392">
    <property type="entry name" value="Prokaryotic lipoproteins and lipoprotein localization factors"/>
    <property type="match status" value="1"/>
</dbReference>
<dbReference type="PROSITE" id="PS51257">
    <property type="entry name" value="PROKAR_LIPOPROTEIN"/>
    <property type="match status" value="1"/>
</dbReference>
<name>LOLB_AERS4</name>
<evidence type="ECO:0000255" key="1">
    <source>
        <dbReference type="HAMAP-Rule" id="MF_00233"/>
    </source>
</evidence>
<comment type="function">
    <text evidence="1">Plays a critical role in the incorporation of lipoproteins in the outer membrane after they are released by the LolA protein.</text>
</comment>
<comment type="subunit">
    <text evidence="1">Monomer.</text>
</comment>
<comment type="subcellular location">
    <subcellularLocation>
        <location evidence="1">Cell outer membrane</location>
        <topology evidence="1">Lipid-anchor</topology>
    </subcellularLocation>
</comment>
<comment type="similarity">
    <text evidence="1">Belongs to the LolB family.</text>
</comment>
<organism>
    <name type="scientific">Aeromonas salmonicida (strain A449)</name>
    <dbReference type="NCBI Taxonomy" id="382245"/>
    <lineage>
        <taxon>Bacteria</taxon>
        <taxon>Pseudomonadati</taxon>
        <taxon>Pseudomonadota</taxon>
        <taxon>Gammaproteobacteria</taxon>
        <taxon>Aeromonadales</taxon>
        <taxon>Aeromonadaceae</taxon>
        <taxon>Aeromonas</taxon>
    </lineage>
</organism>